<organism>
    <name type="scientific">Caenorhabditis elegans</name>
    <dbReference type="NCBI Taxonomy" id="6239"/>
    <lineage>
        <taxon>Eukaryota</taxon>
        <taxon>Metazoa</taxon>
        <taxon>Ecdysozoa</taxon>
        <taxon>Nematoda</taxon>
        <taxon>Chromadorea</taxon>
        <taxon>Rhabditida</taxon>
        <taxon>Rhabditina</taxon>
        <taxon>Rhabditomorpha</taxon>
        <taxon>Rhabditoidea</taxon>
        <taxon>Rhabditidae</taxon>
        <taxon>Peloderinae</taxon>
        <taxon>Caenorhabditis</taxon>
    </lineage>
</organism>
<reference key="1">
    <citation type="journal article" date="2006" name="Dev. Biol.">
        <title>Alterations in ribosome biogenesis cause specific defects in C. elegans hermaphrodite gonadogenesis.</title>
        <authorList>
            <person name="Voutev R."/>
            <person name="Killian D.J."/>
            <person name="Ahn J.H."/>
            <person name="Hubbard E.J.A."/>
        </authorList>
    </citation>
    <scope>NUCLEOTIDE SEQUENCE [MRNA]</scope>
    <scope>FUNCTION</scope>
    <scope>MUTAGENESIS OF GLY-48</scope>
    <scope>DISRUPTION PHENOTYPE</scope>
</reference>
<reference key="2">
    <citation type="journal article" date="1998" name="Science">
        <title>Genome sequence of the nematode C. elegans: a platform for investigating biology.</title>
        <authorList>
            <consortium name="The C. elegans sequencing consortium"/>
        </authorList>
    </citation>
    <scope>NUCLEOTIDE SEQUENCE [LARGE SCALE GENOMIC DNA]</scope>
    <source>
        <strain>Bristol N2</strain>
    </source>
</reference>
<proteinExistence type="evidence at protein level"/>
<comment type="function">
    <text evidence="3 4">Required for 60S pre-ribosomal subunits export to the cytoplasm (Probable). Required for normal somatic gonad development and for regulation of germline development and proliferation.</text>
</comment>
<comment type="subcellular location">
    <subcellularLocation>
        <location evidence="1">Nucleus</location>
    </subcellularLocation>
</comment>
<comment type="disruption phenotype">
    <text evidence="3">Worms exhibit defects in hermaphrodite gonadogenesis and germline proliferation which are associated with a reduction in sheath cell number.</text>
</comment>
<comment type="similarity">
    <text evidence="4">Belongs to the SDA1 family.</text>
</comment>
<accession>Q9NEU2</accession>
<accession>A7UGI8</accession>
<accession>Q9NEV8</accession>
<dbReference type="EMBL" id="EU068466">
    <property type="protein sequence ID" value="ABU49431.1"/>
    <property type="molecule type" value="mRNA"/>
</dbReference>
<dbReference type="EMBL" id="AL132948">
    <property type="protein sequence ID" value="CAD31812.3"/>
    <property type="molecule type" value="Genomic_DNA"/>
</dbReference>
<dbReference type="RefSeq" id="NP_001379304.1">
    <property type="nucleotide sequence ID" value="NM_001392694.1"/>
</dbReference>
<dbReference type="RefSeq" id="NP_741684.2">
    <property type="nucleotide sequence ID" value="NM_171594.4"/>
</dbReference>
<dbReference type="SMR" id="Q9NEU2"/>
<dbReference type="BioGRID" id="45218">
    <property type="interactions" value="8"/>
</dbReference>
<dbReference type="FunCoup" id="Q9NEU2">
    <property type="interactions" value="2385"/>
</dbReference>
<dbReference type="STRING" id="6239.Y39B6A.14.1"/>
<dbReference type="PaxDb" id="6239-Y39B6A.14"/>
<dbReference type="PeptideAtlas" id="Q9NEU2"/>
<dbReference type="EnsemblMetazoa" id="Y39B6A.14.1">
    <property type="protein sequence ID" value="Y39B6A.14.1"/>
    <property type="gene ID" value="WBGene00012676"/>
</dbReference>
<dbReference type="GeneID" id="180256"/>
<dbReference type="UCSC" id="Y39B6A.14">
    <property type="organism name" value="c. elegans"/>
</dbReference>
<dbReference type="AGR" id="WB:WBGene00012676"/>
<dbReference type="WormBase" id="Y39B6A.14">
    <property type="protein sequence ID" value="CE40630"/>
    <property type="gene ID" value="WBGene00012676"/>
    <property type="gene designation" value="pro-3"/>
</dbReference>
<dbReference type="eggNOG" id="KOG2229">
    <property type="taxonomic scope" value="Eukaryota"/>
</dbReference>
<dbReference type="GeneTree" id="ENSGT00390000010355"/>
<dbReference type="HOGENOM" id="CLU_009161_3_1_1"/>
<dbReference type="InParanoid" id="Q9NEU2"/>
<dbReference type="OMA" id="AMYKTYK"/>
<dbReference type="OrthoDB" id="2196187at2759"/>
<dbReference type="PhylomeDB" id="Q9NEU2"/>
<dbReference type="PRO" id="PR:Q9NEU2"/>
<dbReference type="Proteomes" id="UP000001940">
    <property type="component" value="Chromosome V"/>
</dbReference>
<dbReference type="Bgee" id="WBGene00012676">
    <property type="expression patterns" value="Expressed in embryo and 3 other cell types or tissues"/>
</dbReference>
<dbReference type="GO" id="GO:0005730">
    <property type="term" value="C:nucleolus"/>
    <property type="evidence" value="ECO:0000250"/>
    <property type="project" value="UniProtKB"/>
</dbReference>
<dbReference type="GO" id="GO:0030154">
    <property type="term" value="P:cell differentiation"/>
    <property type="evidence" value="ECO:0007669"/>
    <property type="project" value="UniProtKB-KW"/>
</dbReference>
<dbReference type="GO" id="GO:0007506">
    <property type="term" value="P:gonadal mesoderm development"/>
    <property type="evidence" value="ECO:0007669"/>
    <property type="project" value="UniProtKB-KW"/>
</dbReference>
<dbReference type="GO" id="GO:0015031">
    <property type="term" value="P:protein transport"/>
    <property type="evidence" value="ECO:0007669"/>
    <property type="project" value="UniProtKB-KW"/>
</dbReference>
<dbReference type="GO" id="GO:0042273">
    <property type="term" value="P:ribosomal large subunit biogenesis"/>
    <property type="evidence" value="ECO:0000318"/>
    <property type="project" value="GO_Central"/>
</dbReference>
<dbReference type="GO" id="GO:0000055">
    <property type="term" value="P:ribosomal large subunit export from nucleus"/>
    <property type="evidence" value="ECO:0000318"/>
    <property type="project" value="GO_Central"/>
</dbReference>
<dbReference type="InterPro" id="IPR016024">
    <property type="entry name" value="ARM-type_fold"/>
</dbReference>
<dbReference type="InterPro" id="IPR027312">
    <property type="entry name" value="Sda1"/>
</dbReference>
<dbReference type="InterPro" id="IPR048292">
    <property type="entry name" value="SDA1_C"/>
</dbReference>
<dbReference type="InterPro" id="IPR007949">
    <property type="entry name" value="SDA1_MD"/>
</dbReference>
<dbReference type="InterPro" id="IPR012977">
    <property type="entry name" value="SDA1_N"/>
</dbReference>
<dbReference type="PANTHER" id="PTHR12730">
    <property type="entry name" value="HSDA/SDA1-RELATED"/>
    <property type="match status" value="1"/>
</dbReference>
<dbReference type="PANTHER" id="PTHR12730:SF0">
    <property type="entry name" value="PROTEIN SDA1 HOMOLOG"/>
    <property type="match status" value="1"/>
</dbReference>
<dbReference type="Pfam" id="PF21638">
    <property type="entry name" value="SDA1_C"/>
    <property type="match status" value="1"/>
</dbReference>
<dbReference type="Pfam" id="PF05285">
    <property type="entry name" value="SDA1_dom"/>
    <property type="match status" value="1"/>
</dbReference>
<dbReference type="Pfam" id="PF08158">
    <property type="entry name" value="SDA1_HEAT"/>
    <property type="match status" value="1"/>
</dbReference>
<dbReference type="SUPFAM" id="SSF48371">
    <property type="entry name" value="ARM repeat"/>
    <property type="match status" value="1"/>
</dbReference>
<feature type="chain" id="PRO_0000287487" description="Protein SDA1 homolog">
    <location>
        <begin position="1"/>
        <end position="801"/>
    </location>
</feature>
<feature type="region of interest" description="Disordered" evidence="2">
    <location>
        <begin position="1"/>
        <end position="40"/>
    </location>
</feature>
<feature type="region of interest" description="Disordered" evidence="2">
    <location>
        <begin position="495"/>
        <end position="517"/>
    </location>
</feature>
<feature type="region of interest" description="Disordered" evidence="2">
    <location>
        <begin position="536"/>
        <end position="647"/>
    </location>
</feature>
<feature type="region of interest" description="Disordered" evidence="2">
    <location>
        <begin position="739"/>
        <end position="801"/>
    </location>
</feature>
<feature type="compositionally biased region" description="Polar residues" evidence="2">
    <location>
        <begin position="24"/>
        <end position="40"/>
    </location>
</feature>
<feature type="compositionally biased region" description="Acidic residues" evidence="2">
    <location>
        <begin position="544"/>
        <end position="568"/>
    </location>
</feature>
<feature type="compositionally biased region" description="Acidic residues" evidence="2">
    <location>
        <begin position="583"/>
        <end position="633"/>
    </location>
</feature>
<feature type="compositionally biased region" description="Basic residues" evidence="2">
    <location>
        <begin position="770"/>
        <end position="779"/>
    </location>
</feature>
<feature type="compositionally biased region" description="Basic residues" evidence="2">
    <location>
        <begin position="787"/>
        <end position="801"/>
    </location>
</feature>
<feature type="mutagenesis site" description="In ar226; confers a recessive temperature-sensitive Pro phenotype in which an ectopic mass of proliferating germ cells occupies the proximal adult germ line." evidence="3">
    <original>G</original>
    <variation>E</variation>
    <location>
        <position position="48"/>
    </location>
</feature>
<evidence type="ECO:0000250" key="1"/>
<evidence type="ECO:0000256" key="2">
    <source>
        <dbReference type="SAM" id="MobiDB-lite"/>
    </source>
</evidence>
<evidence type="ECO:0000269" key="3">
    <source>
    </source>
</evidence>
<evidence type="ECO:0000305" key="4"/>
<keyword id="KW-0217">Developmental protein</keyword>
<keyword id="KW-0221">Differentiation</keyword>
<keyword id="KW-0334">Gonadal differentiation</keyword>
<keyword id="KW-0539">Nucleus</keyword>
<keyword id="KW-0653">Protein transport</keyword>
<keyword id="KW-1185">Reference proteome</keyword>
<keyword id="KW-0690">Ribosome biogenesis</keyword>
<keyword id="KW-0813">Transport</keyword>
<gene>
    <name type="primary">pro-3</name>
    <name type="ORF">Y39B6A.14</name>
</gene>
<name>SDA1_CAEEL</name>
<protein>
    <recommendedName>
        <fullName>Protein SDA1 homolog</fullName>
    </recommendedName>
    <alternativeName>
        <fullName>Proximal proliferation in germline protein 3</fullName>
    </alternativeName>
</protein>
<sequence length="801" mass="92131">MGKVSKSPGKGEKRIGKVGKKNGKSNAPTEGSNSGKASRFTMSERNLGLMQEIIRKDPESYKEEFLEQFNYFVQTMKLLHLQPEQSRQEMQSLVDSVLFLSGLAKHYPKESKQFSDSLFELLREQGAGLDPEVRMAFCKALVLLRNQDMIDPIILMETFFELVKVEDKVLRKFLLSSISAHLKRVYHKKKDVKMLGKIQNLCFSKMKDSRSIVARAAQLVCIDAFRRKFWRDARTANVIAQACFHKVAKIQVTSMKFFLGSENENGDAEDSDEMDSDAEDNTKTLKEVMTSFRNVKKTRKREKNVERAKKMISKKKKAKKEGRSKECNLMAIQSLYDPQEFVDRLFGAVEAKKMDNFEVRLFKIALCARIIGIHRLHTLSFYSYLHRFLQPKQRDVTKILLYAAQACHEMVPPDTVEQLIRVIANNFVTDRNSPEAMTVGINAIREILSNCPFAATEELLRDLSEYKTYKNKNVSMAARSLITLFRAVNPKLLARKDRGKPQEKDDEDEEYNGFARPKVHDFISGAEILDEDAADGEQGHLEEDGTDSELDVSDVDTDDVDTDDDADEPVAKKKRVEQKSVENDAESDADDEEIEDEEEMDDEEEEIEISDEEEEEIDDEAEEEAVVEEEASEAVEKDPKLKASKNSMDRIMTQEDFKNIKAYQLKKQLIGEKRLKKQMGKGRSQADERIVDEMAEKLELKRSSDGLARLSDIEHFYKKKRQSKEERMADVMAGRADEDYKFGRPKKNGAHVGRTNDQNSKKKVFAMVKNKIRGRNRQRSFRDQQKSLRHYLMRQSGRKPQ</sequence>